<keyword id="KW-1032">Host cell membrane</keyword>
<keyword id="KW-1043">Host membrane</keyword>
<keyword id="KW-0472">Membrane</keyword>
<keyword id="KW-0646">Protease inhibitor</keyword>
<keyword id="KW-0722">Serine protease inhibitor</keyword>
<keyword id="KW-0732">Signal</keyword>
<keyword id="KW-0946">Virion</keyword>
<accession>Q85339</accession>
<organism>
    <name type="scientific">Vaccinia virus (strain Ankara)</name>
    <name type="common">VACV</name>
    <dbReference type="NCBI Taxonomy" id="126794"/>
    <lineage>
        <taxon>Viruses</taxon>
        <taxon>Varidnaviria</taxon>
        <taxon>Bamfordvirae</taxon>
        <taxon>Nucleocytoviricota</taxon>
        <taxon>Pokkesviricetes</taxon>
        <taxon>Chitovirales</taxon>
        <taxon>Poxviridae</taxon>
        <taxon>Chordopoxvirinae</taxon>
        <taxon>Orthopoxvirus</taxon>
        <taxon>Vaccinia virus</taxon>
    </lineage>
</organism>
<gene>
    <name type="primary">OPG040</name>
    <name type="ordered locus">MVA023L</name>
    <name type="ordered locus">ACAM3000_MVA_023</name>
    <name type="ORF">C2L</name>
    <name type="ORF">SPI-3</name>
</gene>
<comment type="function">
    <text evidence="1">Prevents cell to cell fusion via its interaction with A56 protein. The A56-K2 complex associates with components of the entry fusion complex (EFC) presumably to avoid superinfection and syncytium formation (By similarity).</text>
</comment>
<comment type="subunit">
    <text evidence="1">Interacts with A56 protein.</text>
</comment>
<comment type="subcellular location">
    <subcellularLocation>
        <location evidence="1">Virion membrane</location>
        <topology evidence="1">Peripheral membrane protein</topology>
    </subcellularLocation>
    <subcellularLocation>
        <location evidence="1">Host cell membrane</location>
        <topology evidence="1">Peripheral membrane protein</topology>
        <orientation evidence="1">Extracellular side</orientation>
    </subcellularLocation>
    <text evidence="1">Component of extracellular enveloped virus (EEV) but not intracellular mature virus (IMV). Anchored to the surface of the outermost membrane of EEV via its interaction with A56 protein (By similarity).</text>
</comment>
<comment type="induction">
    <text evidence="2">Expressed in the intermediate phase of the viral replicative cycle.</text>
</comment>
<comment type="similarity">
    <text evidence="4">Belongs to the serpin family. Orthopoxvirus OPG040 subfamily.</text>
</comment>
<organismHost>
    <name type="scientific">Homo sapiens</name>
    <name type="common">Human</name>
    <dbReference type="NCBI Taxonomy" id="9606"/>
</organismHost>
<proteinExistence type="inferred from homology"/>
<reference key="1">
    <citation type="journal article" date="1989" name="Arch. Virol.">
        <title>Partial deletion of the human host range gene in the attenuated vaccinia virus MVA.</title>
        <authorList>
            <person name="Altenburger W."/>
            <person name="Suter C.P."/>
            <person name="Altenburger J."/>
        </authorList>
    </citation>
    <scope>NUCLEOTIDE SEQUENCE [GENOMIC DNA]</scope>
</reference>
<reference key="2">
    <citation type="journal article" date="1998" name="Virology">
        <title>The complete genomic sequence of the modified vaccinia Ankara strain: comparison with other orthopoxviruses.</title>
        <authorList>
            <person name="Antoine G."/>
            <person name="Scheiflinger F."/>
            <person name="Dorner F."/>
            <person name="Falkner F.G."/>
        </authorList>
    </citation>
    <scope>NUCLEOTIDE SEQUENCE [LARGE SCALE GENOMIC DNA]</scope>
</reference>
<reference key="3">
    <citation type="submission" date="2004-04" db="EMBL/GenBank/DDBJ databases">
        <authorList>
            <person name="Esposito J.J."/>
            <person name="Frace M."/>
            <person name="Sammons S.A."/>
            <person name="Olsen-Rasmussen M.S."/>
            <person name="Osborne J."/>
            <person name="Khristova M."/>
            <person name="Wohlhueter R.M."/>
        </authorList>
    </citation>
    <scope>NUCLEOTIDE SEQUENCE [LARGE SCALE GENOMIC DNA]</scope>
    <source>
        <strain>Isolate Acambis 3000</strain>
    </source>
</reference>
<dbReference type="EMBL" id="M27650">
    <property type="protein sequence ID" value="AAA69614.1"/>
    <property type="molecule type" value="Genomic_DNA"/>
</dbReference>
<dbReference type="EMBL" id="U94848">
    <property type="protein sequence ID" value="AAB96409.1"/>
    <property type="molecule type" value="Genomic_DNA"/>
</dbReference>
<dbReference type="EMBL" id="AY603355">
    <property type="protein sequence ID" value="AAT10421.1"/>
    <property type="molecule type" value="Genomic_DNA"/>
</dbReference>
<dbReference type="PIR" id="T30775">
    <property type="entry name" value="T30775"/>
</dbReference>
<dbReference type="SMR" id="Q85339"/>
<dbReference type="MEROPS" id="I04.047"/>
<dbReference type="Proteomes" id="UP000159908">
    <property type="component" value="Segment"/>
</dbReference>
<dbReference type="Proteomes" id="UP000172909">
    <property type="component" value="Segment"/>
</dbReference>
<dbReference type="GO" id="GO:0005615">
    <property type="term" value="C:extracellular space"/>
    <property type="evidence" value="ECO:0007669"/>
    <property type="project" value="InterPro"/>
</dbReference>
<dbReference type="GO" id="GO:0020002">
    <property type="term" value="C:host cell plasma membrane"/>
    <property type="evidence" value="ECO:0007669"/>
    <property type="project" value="UniProtKB-SubCell"/>
</dbReference>
<dbReference type="GO" id="GO:0016020">
    <property type="term" value="C:membrane"/>
    <property type="evidence" value="ECO:0007669"/>
    <property type="project" value="UniProtKB-KW"/>
</dbReference>
<dbReference type="GO" id="GO:0055036">
    <property type="term" value="C:virion membrane"/>
    <property type="evidence" value="ECO:0007669"/>
    <property type="project" value="UniProtKB-SubCell"/>
</dbReference>
<dbReference type="GO" id="GO:0004867">
    <property type="term" value="F:serine-type endopeptidase inhibitor activity"/>
    <property type="evidence" value="ECO:0007669"/>
    <property type="project" value="UniProtKB-KW"/>
</dbReference>
<dbReference type="CDD" id="cd19584">
    <property type="entry name" value="serpinO_SPI-3_virus"/>
    <property type="match status" value="1"/>
</dbReference>
<dbReference type="Gene3D" id="2.30.39.10">
    <property type="entry name" value="Alpha-1-antitrypsin, domain 1"/>
    <property type="match status" value="1"/>
</dbReference>
<dbReference type="Gene3D" id="3.30.497.10">
    <property type="entry name" value="Antithrombin, subunit I, domain 2"/>
    <property type="match status" value="1"/>
</dbReference>
<dbReference type="InterPro" id="IPR023796">
    <property type="entry name" value="Serpin_dom"/>
</dbReference>
<dbReference type="InterPro" id="IPR000215">
    <property type="entry name" value="Serpin_fam"/>
</dbReference>
<dbReference type="InterPro" id="IPR036186">
    <property type="entry name" value="Serpin_sf"/>
</dbReference>
<dbReference type="InterPro" id="IPR042178">
    <property type="entry name" value="Serpin_sf_1"/>
</dbReference>
<dbReference type="InterPro" id="IPR042185">
    <property type="entry name" value="Serpin_sf_2"/>
</dbReference>
<dbReference type="PANTHER" id="PTHR11461:SF211">
    <property type="entry name" value="GH10112P-RELATED"/>
    <property type="match status" value="1"/>
</dbReference>
<dbReference type="PANTHER" id="PTHR11461">
    <property type="entry name" value="SERINE PROTEASE INHIBITOR, SERPIN"/>
    <property type="match status" value="1"/>
</dbReference>
<dbReference type="Pfam" id="PF00079">
    <property type="entry name" value="Serpin"/>
    <property type="match status" value="1"/>
</dbReference>
<dbReference type="SMART" id="SM00093">
    <property type="entry name" value="SERPIN"/>
    <property type="match status" value="1"/>
</dbReference>
<dbReference type="SUPFAM" id="SSF56574">
    <property type="entry name" value="Serpins"/>
    <property type="match status" value="1"/>
</dbReference>
<evidence type="ECO:0000250" key="1"/>
<evidence type="ECO:0000250" key="2">
    <source>
        <dbReference type="UniProtKB" id="P18384"/>
    </source>
</evidence>
<evidence type="ECO:0000255" key="3"/>
<evidence type="ECO:0000305" key="4"/>
<sequence length="369" mass="42257">MIALLILSLTCSASTYRLQGFTNAGIVAYKNIQDDNIVFSPFGYSFSMFMSLLPASGNTRIELLKTMDLRKRDLGPAFTELISGLAKLKTSKYTYTDLTYQSFVDNTVCIKPSYYQQYHRFGLYRLNFRRDAVNKINSIVERRSGMSNVVDSNMLDNNTLWAIINTIYFKGIWQYPFDITKTRNASFTNKYGTKTVPMMNVVTKLQGNTITIDDKEYDMVRLPYKDANISMYLAIGDNMTHFTDSITAAKLDYWSFQLGNKVYNLKLPKFSIENKRDIKSIAEMMAPSMFNPDNASFKHMTRDPLYIYKMFQNAKIDVDEQGTVAEASTIMVATARSSPEKLEFNTPFVFIIRHDITGFILFMGKVESP</sequence>
<protein>
    <recommendedName>
        <fullName>Superinfection exclusion protein</fullName>
    </recommendedName>
    <alternativeName>
        <fullName>Protein K2</fullName>
    </alternativeName>
    <alternativeName>
        <fullName>Serine proteinase inhibitor 3</fullName>
    </alternativeName>
</protein>
<feature type="signal peptide" evidence="3">
    <location>
        <begin position="1"/>
        <end position="15"/>
    </location>
</feature>
<feature type="chain" id="PRO_0000094150" description="Superinfection exclusion protein">
    <location>
        <begin position="16"/>
        <end position="369"/>
    </location>
</feature>
<name>PG040_VACCA</name>